<keyword id="KW-0030">Aminoacyl-tRNA synthetase</keyword>
<keyword id="KW-0067">ATP-binding</keyword>
<keyword id="KW-0963">Cytoplasm</keyword>
<keyword id="KW-0436">Ligase</keyword>
<keyword id="KW-0547">Nucleotide-binding</keyword>
<keyword id="KW-0648">Protein biosynthesis</keyword>
<accession>Q2FJ29</accession>
<dbReference type="EC" id="6.1.1.19" evidence="1"/>
<dbReference type="EMBL" id="CP000255">
    <property type="protein sequence ID" value="ABD22541.1"/>
    <property type="molecule type" value="Genomic_DNA"/>
</dbReference>
<dbReference type="RefSeq" id="WP_001021145.1">
    <property type="nucleotide sequence ID" value="NZ_CP027476.1"/>
</dbReference>
<dbReference type="SMR" id="Q2FJ29"/>
<dbReference type="KEGG" id="saa:SAUSA300_0596"/>
<dbReference type="HOGENOM" id="CLU_006406_0_1_9"/>
<dbReference type="OMA" id="YEFKWER"/>
<dbReference type="Proteomes" id="UP000001939">
    <property type="component" value="Chromosome"/>
</dbReference>
<dbReference type="GO" id="GO:0005737">
    <property type="term" value="C:cytoplasm"/>
    <property type="evidence" value="ECO:0007669"/>
    <property type="project" value="UniProtKB-SubCell"/>
</dbReference>
<dbReference type="GO" id="GO:0004814">
    <property type="term" value="F:arginine-tRNA ligase activity"/>
    <property type="evidence" value="ECO:0007669"/>
    <property type="project" value="UniProtKB-UniRule"/>
</dbReference>
<dbReference type="GO" id="GO:0005524">
    <property type="term" value="F:ATP binding"/>
    <property type="evidence" value="ECO:0007669"/>
    <property type="project" value="UniProtKB-UniRule"/>
</dbReference>
<dbReference type="GO" id="GO:0006420">
    <property type="term" value="P:arginyl-tRNA aminoacylation"/>
    <property type="evidence" value="ECO:0007669"/>
    <property type="project" value="UniProtKB-UniRule"/>
</dbReference>
<dbReference type="CDD" id="cd00671">
    <property type="entry name" value="ArgRS_core"/>
    <property type="match status" value="1"/>
</dbReference>
<dbReference type="FunFam" id="1.10.730.10:FF:000008">
    <property type="entry name" value="Arginine--tRNA ligase"/>
    <property type="match status" value="1"/>
</dbReference>
<dbReference type="FunFam" id="3.30.1360.70:FF:000003">
    <property type="entry name" value="Arginine--tRNA ligase"/>
    <property type="match status" value="1"/>
</dbReference>
<dbReference type="FunFam" id="3.40.50.620:FF:000062">
    <property type="entry name" value="Arginine--tRNA ligase"/>
    <property type="match status" value="1"/>
</dbReference>
<dbReference type="Gene3D" id="3.30.1360.70">
    <property type="entry name" value="Arginyl tRNA synthetase N-terminal domain"/>
    <property type="match status" value="1"/>
</dbReference>
<dbReference type="Gene3D" id="3.40.50.620">
    <property type="entry name" value="HUPs"/>
    <property type="match status" value="1"/>
</dbReference>
<dbReference type="Gene3D" id="1.10.730.10">
    <property type="entry name" value="Isoleucyl-tRNA Synthetase, Domain 1"/>
    <property type="match status" value="1"/>
</dbReference>
<dbReference type="HAMAP" id="MF_00123">
    <property type="entry name" value="Arg_tRNA_synth"/>
    <property type="match status" value="1"/>
</dbReference>
<dbReference type="InterPro" id="IPR001412">
    <property type="entry name" value="aa-tRNA-synth_I_CS"/>
</dbReference>
<dbReference type="InterPro" id="IPR001278">
    <property type="entry name" value="Arg-tRNA-ligase"/>
</dbReference>
<dbReference type="InterPro" id="IPR005148">
    <property type="entry name" value="Arg-tRNA-synth_N"/>
</dbReference>
<dbReference type="InterPro" id="IPR036695">
    <property type="entry name" value="Arg-tRNA-synth_N_sf"/>
</dbReference>
<dbReference type="InterPro" id="IPR035684">
    <property type="entry name" value="ArgRS_core"/>
</dbReference>
<dbReference type="InterPro" id="IPR008909">
    <property type="entry name" value="DALR_anticod-bd"/>
</dbReference>
<dbReference type="InterPro" id="IPR014729">
    <property type="entry name" value="Rossmann-like_a/b/a_fold"/>
</dbReference>
<dbReference type="InterPro" id="IPR009080">
    <property type="entry name" value="tRNAsynth_Ia_anticodon-bd"/>
</dbReference>
<dbReference type="NCBIfam" id="TIGR00456">
    <property type="entry name" value="argS"/>
    <property type="match status" value="1"/>
</dbReference>
<dbReference type="PANTHER" id="PTHR11956:SF5">
    <property type="entry name" value="ARGININE--TRNA LIGASE, CYTOPLASMIC"/>
    <property type="match status" value="1"/>
</dbReference>
<dbReference type="PANTHER" id="PTHR11956">
    <property type="entry name" value="ARGINYL-TRNA SYNTHETASE"/>
    <property type="match status" value="1"/>
</dbReference>
<dbReference type="Pfam" id="PF03485">
    <property type="entry name" value="Arg_tRNA_synt_N"/>
    <property type="match status" value="1"/>
</dbReference>
<dbReference type="Pfam" id="PF05746">
    <property type="entry name" value="DALR_1"/>
    <property type="match status" value="1"/>
</dbReference>
<dbReference type="Pfam" id="PF00750">
    <property type="entry name" value="tRNA-synt_1d"/>
    <property type="match status" value="1"/>
</dbReference>
<dbReference type="PRINTS" id="PR01038">
    <property type="entry name" value="TRNASYNTHARG"/>
</dbReference>
<dbReference type="SMART" id="SM01016">
    <property type="entry name" value="Arg_tRNA_synt_N"/>
    <property type="match status" value="1"/>
</dbReference>
<dbReference type="SMART" id="SM00836">
    <property type="entry name" value="DALR_1"/>
    <property type="match status" value="1"/>
</dbReference>
<dbReference type="SUPFAM" id="SSF47323">
    <property type="entry name" value="Anticodon-binding domain of a subclass of class I aminoacyl-tRNA synthetases"/>
    <property type="match status" value="1"/>
</dbReference>
<dbReference type="SUPFAM" id="SSF55190">
    <property type="entry name" value="Arginyl-tRNA synthetase (ArgRS), N-terminal 'additional' domain"/>
    <property type="match status" value="1"/>
</dbReference>
<dbReference type="SUPFAM" id="SSF52374">
    <property type="entry name" value="Nucleotidylyl transferase"/>
    <property type="match status" value="1"/>
</dbReference>
<dbReference type="PROSITE" id="PS00178">
    <property type="entry name" value="AA_TRNA_LIGASE_I"/>
    <property type="match status" value="1"/>
</dbReference>
<comment type="catalytic activity">
    <reaction evidence="1">
        <text>tRNA(Arg) + L-arginine + ATP = L-arginyl-tRNA(Arg) + AMP + diphosphate</text>
        <dbReference type="Rhea" id="RHEA:20301"/>
        <dbReference type="Rhea" id="RHEA-COMP:9658"/>
        <dbReference type="Rhea" id="RHEA-COMP:9673"/>
        <dbReference type="ChEBI" id="CHEBI:30616"/>
        <dbReference type="ChEBI" id="CHEBI:32682"/>
        <dbReference type="ChEBI" id="CHEBI:33019"/>
        <dbReference type="ChEBI" id="CHEBI:78442"/>
        <dbReference type="ChEBI" id="CHEBI:78513"/>
        <dbReference type="ChEBI" id="CHEBI:456215"/>
        <dbReference type="EC" id="6.1.1.19"/>
    </reaction>
</comment>
<comment type="subunit">
    <text evidence="1">Monomer.</text>
</comment>
<comment type="subcellular location">
    <subcellularLocation>
        <location evidence="1">Cytoplasm</location>
    </subcellularLocation>
</comment>
<comment type="similarity">
    <text evidence="1">Belongs to the class-I aminoacyl-tRNA synthetase family.</text>
</comment>
<proteinExistence type="inferred from homology"/>
<organism>
    <name type="scientific">Staphylococcus aureus (strain USA300)</name>
    <dbReference type="NCBI Taxonomy" id="367830"/>
    <lineage>
        <taxon>Bacteria</taxon>
        <taxon>Bacillati</taxon>
        <taxon>Bacillota</taxon>
        <taxon>Bacilli</taxon>
        <taxon>Bacillales</taxon>
        <taxon>Staphylococcaceae</taxon>
        <taxon>Staphylococcus</taxon>
    </lineage>
</organism>
<sequence length="553" mass="62381">MNIIDQVKQTLVEEIAASINKAGLADEIPDIKIEVPKDTKNGDYATNIAMVLTKIAKRNPREIAQAIVDNLDTEKAHVKQIDIAGPGFINFYLDNQYLTAIIPEAIEKGDQFGHVNESKGQNVLLEYVSANPTGDLHIGHARNAAVGDALANILTAAGYNVTREYYINDAGNQITNLARSIETRFFEALGDNSYSMPEDGYNGKDIIEIGKDLAEKHPEIKDYSEEARLKEFRKLGVEYEMAKLKNDLAEFNTHFDNWFSETSLYEKGEILEVLAKMKELGYTYEADGATWLRTTDFKDDKDRVLIKNDGTYTYFLPDIAYHFDKVKRGNDILIDLFGADHHGYINRLKASLETFGVDSNRLEIQIMQMVRLMENGKEVKMSKRTGNAITLREIMDEVGVDAARYFLTMRSPDSHFDFDMELAKEQSQDNPVYYAQYAHARICSILKQAKEQGIEVTAANDFTTITNEKAIELLKKVADFEPTIESAAEHRSAHRITNYIQDLASHFHKFYNAEKVLTDDIEKTKAHVAMIEAVRITLKNALAMVGVSAPESM</sequence>
<evidence type="ECO:0000255" key="1">
    <source>
        <dbReference type="HAMAP-Rule" id="MF_00123"/>
    </source>
</evidence>
<name>SYR_STAA3</name>
<reference key="1">
    <citation type="journal article" date="2006" name="Lancet">
        <title>Complete genome sequence of USA300, an epidemic clone of community-acquired meticillin-resistant Staphylococcus aureus.</title>
        <authorList>
            <person name="Diep B.A."/>
            <person name="Gill S.R."/>
            <person name="Chang R.F."/>
            <person name="Phan T.H."/>
            <person name="Chen J.H."/>
            <person name="Davidson M.G."/>
            <person name="Lin F."/>
            <person name="Lin J."/>
            <person name="Carleton H.A."/>
            <person name="Mongodin E.F."/>
            <person name="Sensabaugh G.F."/>
            <person name="Perdreau-Remington F."/>
        </authorList>
    </citation>
    <scope>NUCLEOTIDE SEQUENCE [LARGE SCALE GENOMIC DNA]</scope>
    <source>
        <strain>USA300</strain>
    </source>
</reference>
<protein>
    <recommendedName>
        <fullName evidence="1">Arginine--tRNA ligase</fullName>
        <ecNumber evidence="1">6.1.1.19</ecNumber>
    </recommendedName>
    <alternativeName>
        <fullName evidence="1">Arginyl-tRNA synthetase</fullName>
        <shortName evidence="1">ArgRS</shortName>
    </alternativeName>
</protein>
<feature type="chain" id="PRO_0000242096" description="Arginine--tRNA ligase">
    <location>
        <begin position="1"/>
        <end position="553"/>
    </location>
</feature>
<feature type="short sequence motif" description="'HIGH' region">
    <location>
        <begin position="130"/>
        <end position="140"/>
    </location>
</feature>
<gene>
    <name evidence="1" type="primary">argS</name>
    <name type="ordered locus">SAUSA300_0596</name>
</gene>